<reference key="1">
    <citation type="journal article" date="1997" name="Nature">
        <title>The nucleotide sequence of Saccharomyces cerevisiae chromosome XIII.</title>
        <authorList>
            <person name="Bowman S."/>
            <person name="Churcher C.M."/>
            <person name="Badcock K."/>
            <person name="Brown D."/>
            <person name="Chillingworth T."/>
            <person name="Connor R."/>
            <person name="Dedman K."/>
            <person name="Devlin K."/>
            <person name="Gentles S."/>
            <person name="Hamlin N."/>
            <person name="Hunt S."/>
            <person name="Jagels K."/>
            <person name="Lye G."/>
            <person name="Moule S."/>
            <person name="Odell C."/>
            <person name="Pearson D."/>
            <person name="Rajandream M.A."/>
            <person name="Rice P."/>
            <person name="Skelton J."/>
            <person name="Walsh S.V."/>
            <person name="Whitehead S."/>
            <person name="Barrell B.G."/>
        </authorList>
    </citation>
    <scope>NUCLEOTIDE SEQUENCE [LARGE SCALE GENOMIC DNA]</scope>
    <source>
        <strain>ATCC 204508 / S288c</strain>
    </source>
</reference>
<reference key="2">
    <citation type="journal article" date="2014" name="G3 (Bethesda)">
        <title>The reference genome sequence of Saccharomyces cerevisiae: Then and now.</title>
        <authorList>
            <person name="Engel S.R."/>
            <person name="Dietrich F.S."/>
            <person name="Fisk D.G."/>
            <person name="Binkley G."/>
            <person name="Balakrishnan R."/>
            <person name="Costanzo M.C."/>
            <person name="Dwight S.S."/>
            <person name="Hitz B.C."/>
            <person name="Karra K."/>
            <person name="Nash R.S."/>
            <person name="Weng S."/>
            <person name="Wong E.D."/>
            <person name="Lloyd P."/>
            <person name="Skrzypek M.S."/>
            <person name="Miyasato S.R."/>
            <person name="Simison M."/>
            <person name="Cherry J.M."/>
        </authorList>
    </citation>
    <scope>GENOME REANNOTATION</scope>
    <source>
        <strain>ATCC 204508 / S288c</strain>
    </source>
</reference>
<reference key="3">
    <citation type="journal article" date="2003" name="Nature">
        <title>Global analysis of protein localization in budding yeast.</title>
        <authorList>
            <person name="Huh W.-K."/>
            <person name="Falvo J.V."/>
            <person name="Gerke L.C."/>
            <person name="Carroll A.S."/>
            <person name="Howson R.W."/>
            <person name="Weissman J.S."/>
            <person name="O'Shea E.K."/>
        </authorList>
    </citation>
    <scope>SUBCELLULAR LOCATION [LARGE SCALE ANALYSIS]</scope>
</reference>
<reference key="4">
    <citation type="journal article" date="2003" name="Nature">
        <title>Global analysis of protein expression in yeast.</title>
        <authorList>
            <person name="Ghaemmaghami S."/>
            <person name="Huh W.-K."/>
            <person name="Bower K."/>
            <person name="Howson R.W."/>
            <person name="Belle A."/>
            <person name="Dephoure N."/>
            <person name="O'Shea E.K."/>
            <person name="Weissman J.S."/>
        </authorList>
    </citation>
    <scope>LEVEL OF PROTEIN EXPRESSION [LARGE SCALE ANALYSIS]</scope>
</reference>
<reference key="5">
    <citation type="journal article" date="2006" name="Dev. Cell">
        <title>The peroxisomal membrane protein Inp2p is the peroxisome-specific receptor for the myosin V motor Myo2p of Saccharomyces cerevisiae.</title>
        <authorList>
            <person name="Fagarasanu A."/>
            <person name="Fagarasanu M."/>
            <person name="Eitzen G.A."/>
            <person name="Aitchison J.D."/>
            <person name="Rachubinski R.A."/>
        </authorList>
    </citation>
    <scope>FUNCTION</scope>
    <scope>SUBCELLULAR LOCATION</scope>
    <scope>INTERACTION WITH MYO2</scope>
</reference>
<keyword id="KW-0002">3D-structure</keyword>
<keyword id="KW-0325">Glycoprotein</keyword>
<keyword id="KW-0472">Membrane</keyword>
<keyword id="KW-0576">Peroxisome</keyword>
<keyword id="KW-0675">Receptor</keyword>
<keyword id="KW-1185">Reference proteome</keyword>
<keyword id="KW-0812">Transmembrane</keyword>
<keyword id="KW-1133">Transmembrane helix</keyword>
<accession>Q03824</accession>
<accession>D6VZY5</accession>
<organism>
    <name type="scientific">Saccharomyces cerevisiae (strain ATCC 204508 / S288c)</name>
    <name type="common">Baker's yeast</name>
    <dbReference type="NCBI Taxonomy" id="559292"/>
    <lineage>
        <taxon>Eukaryota</taxon>
        <taxon>Fungi</taxon>
        <taxon>Dikarya</taxon>
        <taxon>Ascomycota</taxon>
        <taxon>Saccharomycotina</taxon>
        <taxon>Saccharomycetes</taxon>
        <taxon>Saccharomycetales</taxon>
        <taxon>Saccharomycetaceae</taxon>
        <taxon>Saccharomyces</taxon>
    </lineage>
</organism>
<proteinExistence type="evidence at protein level"/>
<evidence type="ECO:0000255" key="1"/>
<evidence type="ECO:0000269" key="2">
    <source>
    </source>
</evidence>
<evidence type="ECO:0000269" key="3">
    <source>
    </source>
</evidence>
<evidence type="ECO:0000269" key="4">
    <source>
    </source>
</evidence>
<evidence type="ECO:0000305" key="5"/>
<sequence>MTTNSRPSALQAPGLQIFSMLKSSEEDGFMSSSLTLDSDNIIGVTENNRQEFYSTWRKPSLLSSRSVLHEYSPTIVGSNDCTFSPITVGKTTKFFNWDDIISRIFMQQPFGVTHQFFEEFRYSIITSHFLNDMNHYRLSLHLDQSIMNFHKSSTLLKNVPPKSVPFMATKYGKLAVAEDKKLYFRQNFNYLSMIITSYRVLTQLKKYCRKKNSPGLKRVVILILVAVYLSIQQEYFRRHLICYKTLLKVRKVLESLQQVDVMIHKYHLRFKEIKNHSFISRVSLISIADEHSSVIKELLVFSSDALFYKLKSIIPDIVIFSDTSELSKYCELYGIDVPNLYYNNTTTVKDLDGKLYRLKLLKKFMLCCLLSLDMTGNENLSNVNMRNALNKIFPDYMARVQLKKKYNPIGTFQNIVSLLRGLHSLLSTVLVSLNDHKQILYAFPEETSTNTGCERANVCSFSKNDKLFQALNYLKMIENNLLAIDIRNGITENDRNIIEDKLEELITFWKTSKICGNISRIQKVSPTNTINHGFHLDILKGRKSPRSSSVQGLSLERKVDFIDVAESVNDSFENDTELEEYEDYDCQEECSAGSRQNHRVDFIGKDSCRKPDFKQLSDNELRRKLDERILKLAQENREGRERLRTAKSFELLRKAQASMSVKFGFQKPLRDDAFLESRPLSKCKVSSEETIPFLYELKGLLGNDS</sequence>
<protein>
    <recommendedName>
        <fullName>Inheritance of peroxisomes protein 2</fullName>
    </recommendedName>
</protein>
<gene>
    <name type="primary">INP2</name>
    <name type="ordered locus">YMR163C</name>
    <name type="ORF">YM8520.12C</name>
</gene>
<name>INP2_YEAST</name>
<feature type="chain" id="PRO_0000203314" description="Inheritance of peroxisomes protein 2">
    <location>
        <begin position="1"/>
        <end position="705"/>
    </location>
</feature>
<feature type="transmembrane region" description="Helical" evidence="1">
    <location>
        <begin position="215"/>
        <end position="231"/>
    </location>
</feature>
<feature type="glycosylation site" description="N-linked (GlcNAc...) asparagine" evidence="1">
    <location>
        <position position="275"/>
    </location>
</feature>
<feature type="glycosylation site" description="N-linked (GlcNAc...) asparagine" evidence="1">
    <location>
        <position position="343"/>
    </location>
</feature>
<feature type="glycosylation site" description="N-linked (GlcNAc...) asparagine" evidence="1">
    <location>
        <position position="344"/>
    </location>
</feature>
<feature type="glycosylation site" description="N-linked (GlcNAc...) asparagine" evidence="1">
    <location>
        <position position="379"/>
    </location>
</feature>
<feature type="glycosylation site" description="N-linked (GlcNAc...) asparagine" evidence="1">
    <location>
        <position position="517"/>
    </location>
</feature>
<feature type="glycosylation site" description="N-linked (GlcNAc...) asparagine" evidence="1">
    <location>
        <position position="569"/>
    </location>
</feature>
<feature type="glycosylation site" description="N-linked (GlcNAc...) asparagine" evidence="1">
    <location>
        <position position="574"/>
    </location>
</feature>
<dbReference type="EMBL" id="Z49705">
    <property type="protein sequence ID" value="CAA89799.1"/>
    <property type="molecule type" value="Genomic_DNA"/>
</dbReference>
<dbReference type="EMBL" id="BK006946">
    <property type="protein sequence ID" value="DAA10059.1"/>
    <property type="molecule type" value="Genomic_DNA"/>
</dbReference>
<dbReference type="PIR" id="S54521">
    <property type="entry name" value="S54521"/>
</dbReference>
<dbReference type="RefSeq" id="NP_013886.1">
    <property type="nucleotide sequence ID" value="NM_001182667.1"/>
</dbReference>
<dbReference type="PDB" id="6IXR">
    <property type="method" value="X-ray"/>
    <property type="resolution" value="2.85 A"/>
    <property type="chains" value="B=531-543"/>
</dbReference>
<dbReference type="PDBsum" id="6IXR"/>
<dbReference type="SMR" id="Q03824"/>
<dbReference type="BioGRID" id="35340">
    <property type="interactions" value="80"/>
</dbReference>
<dbReference type="DIP" id="DIP-1673N"/>
<dbReference type="FunCoup" id="Q03824">
    <property type="interactions" value="140"/>
</dbReference>
<dbReference type="IntAct" id="Q03824">
    <property type="interactions" value="6"/>
</dbReference>
<dbReference type="MINT" id="Q03824"/>
<dbReference type="STRING" id="4932.YMR163C"/>
<dbReference type="GlyCosmos" id="Q03824">
    <property type="glycosylation" value="7 sites, No reported glycans"/>
</dbReference>
<dbReference type="GlyGen" id="Q03824">
    <property type="glycosylation" value="7 sites"/>
</dbReference>
<dbReference type="iPTMnet" id="Q03824"/>
<dbReference type="PaxDb" id="4932-YMR163C"/>
<dbReference type="PeptideAtlas" id="Q03824"/>
<dbReference type="EnsemblFungi" id="YMR163C_mRNA">
    <property type="protein sequence ID" value="YMR163C"/>
    <property type="gene ID" value="YMR163C"/>
</dbReference>
<dbReference type="GeneID" id="855198"/>
<dbReference type="KEGG" id="sce:YMR163C"/>
<dbReference type="AGR" id="SGD:S000004773"/>
<dbReference type="SGD" id="S000004773">
    <property type="gene designation" value="INP2"/>
</dbReference>
<dbReference type="VEuPathDB" id="FungiDB:YMR163C"/>
<dbReference type="eggNOG" id="ENOG502QR0E">
    <property type="taxonomic scope" value="Eukaryota"/>
</dbReference>
<dbReference type="HOGENOM" id="CLU_024345_0_0_1"/>
<dbReference type="InParanoid" id="Q03824"/>
<dbReference type="OMA" id="FQYTIIA"/>
<dbReference type="OrthoDB" id="4045067at2759"/>
<dbReference type="BioCyc" id="YEAST:G3O-32853-MONOMER"/>
<dbReference type="BioGRID-ORCS" id="855198">
    <property type="hits" value="0 hits in 10 CRISPR screens"/>
</dbReference>
<dbReference type="PRO" id="PR:Q03824"/>
<dbReference type="Proteomes" id="UP000002311">
    <property type="component" value="Chromosome XIII"/>
</dbReference>
<dbReference type="RNAct" id="Q03824">
    <property type="molecule type" value="protein"/>
</dbReference>
<dbReference type="GO" id="GO:0005737">
    <property type="term" value="C:cytoplasm"/>
    <property type="evidence" value="ECO:0007005"/>
    <property type="project" value="SGD"/>
</dbReference>
<dbReference type="GO" id="GO:0005778">
    <property type="term" value="C:peroxisomal membrane"/>
    <property type="evidence" value="ECO:0000314"/>
    <property type="project" value="SGD"/>
</dbReference>
<dbReference type="GO" id="GO:0043495">
    <property type="term" value="F:protein-membrane adaptor activity"/>
    <property type="evidence" value="ECO:0000315"/>
    <property type="project" value="SGD"/>
</dbReference>
<dbReference type="GO" id="GO:0045033">
    <property type="term" value="P:peroxisome inheritance"/>
    <property type="evidence" value="ECO:0000315"/>
    <property type="project" value="SGD"/>
</dbReference>
<dbReference type="InterPro" id="IPR026235">
    <property type="entry name" value="INP2"/>
</dbReference>
<dbReference type="PRINTS" id="PR02104">
    <property type="entry name" value="INPROXISOME2"/>
</dbReference>
<comment type="function">
    <text evidence="4">Required for peroxisome inheritance. Acts as the peroxisome-specific receptor for the myosin V motor MYO2.</text>
</comment>
<comment type="subunit">
    <text evidence="4">Interacts with MYO2.</text>
</comment>
<comment type="interaction">
    <interactant intactId="EBI-27354">
        <id>Q03824</id>
    </interactant>
    <interactant intactId="EBI-11659">
        <id>P19524</id>
        <label>MYO2</label>
    </interactant>
    <organismsDiffer>false</organismsDiffer>
    <experiments>3</experiments>
</comment>
<comment type="interaction">
    <interactant intactId="EBI-27354">
        <id>Q03824</id>
    </interactant>
    <interactant intactId="EBI-292">
        <id>Q07418</id>
        <label>PEX19</label>
    </interactant>
    <organismsDiffer>false</organismsDiffer>
    <experiments>3</experiments>
</comment>
<comment type="subcellular location">
    <subcellularLocation>
        <location evidence="2 4">Peroxisome membrane</location>
        <topology evidence="2 4">Single-pass membrane protein</topology>
    </subcellularLocation>
</comment>
<comment type="miscellaneous">
    <text evidence="3">Present with 736 molecules/cell in log phase SD medium.</text>
</comment>
<comment type="similarity">
    <text evidence="5">Belongs to the INP2 family.</text>
</comment>